<organism>
    <name type="scientific">Populus deltoides</name>
    <name type="common">Eastern poplar</name>
    <name type="synonym">Eastern cottonwood</name>
    <dbReference type="NCBI Taxonomy" id="3696"/>
    <lineage>
        <taxon>Eukaryota</taxon>
        <taxon>Viridiplantae</taxon>
        <taxon>Streptophyta</taxon>
        <taxon>Embryophyta</taxon>
        <taxon>Tracheophyta</taxon>
        <taxon>Spermatophyta</taxon>
        <taxon>Magnoliopsida</taxon>
        <taxon>eudicotyledons</taxon>
        <taxon>Gunneridae</taxon>
        <taxon>Pentapetalae</taxon>
        <taxon>rosids</taxon>
        <taxon>fabids</taxon>
        <taxon>Malpighiales</taxon>
        <taxon>Salicaceae</taxon>
        <taxon>Saliceae</taxon>
        <taxon>Populus</taxon>
    </lineage>
</organism>
<keyword id="KW-0007">Acetylation</keyword>
<keyword id="KW-0106">Calcium</keyword>
<keyword id="KW-0148">Chlorophyll</keyword>
<keyword id="KW-0150">Chloroplast</keyword>
<keyword id="KW-0157">Chromophore</keyword>
<keyword id="KW-0249">Electron transport</keyword>
<keyword id="KW-0359">Herbicide resistance</keyword>
<keyword id="KW-0408">Iron</keyword>
<keyword id="KW-0460">Magnesium</keyword>
<keyword id="KW-0464">Manganese</keyword>
<keyword id="KW-0472">Membrane</keyword>
<keyword id="KW-0479">Metal-binding</keyword>
<keyword id="KW-0560">Oxidoreductase</keyword>
<keyword id="KW-0597">Phosphoprotein</keyword>
<keyword id="KW-0602">Photosynthesis</keyword>
<keyword id="KW-0604">Photosystem II</keyword>
<keyword id="KW-0934">Plastid</keyword>
<keyword id="KW-0793">Thylakoid</keyword>
<keyword id="KW-0812">Transmembrane</keyword>
<keyword id="KW-1133">Transmembrane helix</keyword>
<keyword id="KW-0813">Transport</keyword>
<name>PSBA_POPDE</name>
<reference key="1">
    <citation type="journal article" date="1994" name="J. Plant Biochem. Biotechnol.">
        <title>Characterization of the psbA gene from chloroplast of Populus deltoides.</title>
        <authorList>
            <person name="Trivedi P.K."/>
            <person name="Nath P."/>
            <person name="Sane P.V."/>
        </authorList>
    </citation>
    <scope>NUCLEOTIDE SEQUENCE [GENOMIC DNA]</scope>
    <source>
        <strain>cv. Stoneville D121</strain>
        <tissue>Leaf</tissue>
    </source>
</reference>
<comment type="function">
    <text evidence="1">Photosystem II (PSII) is a light-driven water:plastoquinone oxidoreductase that uses light energy to abstract electrons from H(2)O, generating O(2) and a proton gradient subsequently used for ATP formation. It consists of a core antenna complex that captures photons, and an electron transfer chain that converts photonic excitation into a charge separation. The D1/D2 (PsbA/PsbD) reaction center heterodimer binds P680, the primary electron donor of PSII as well as several subsequent electron acceptors.</text>
</comment>
<comment type="catalytic activity">
    <reaction evidence="1">
        <text>2 a plastoquinone + 4 hnu + 2 H2O = 2 a plastoquinol + O2</text>
        <dbReference type="Rhea" id="RHEA:36359"/>
        <dbReference type="Rhea" id="RHEA-COMP:9561"/>
        <dbReference type="Rhea" id="RHEA-COMP:9562"/>
        <dbReference type="ChEBI" id="CHEBI:15377"/>
        <dbReference type="ChEBI" id="CHEBI:15379"/>
        <dbReference type="ChEBI" id="CHEBI:17757"/>
        <dbReference type="ChEBI" id="CHEBI:30212"/>
        <dbReference type="ChEBI" id="CHEBI:62192"/>
        <dbReference type="EC" id="1.10.3.9"/>
    </reaction>
</comment>
<comment type="cofactor">
    <text evidence="1">The D1/D2 heterodimer binds P680, chlorophylls that are the primary electron donor of PSII, and subsequent electron acceptors. It shares a non-heme iron and each subunit binds pheophytin, quinone, additional chlorophylls, carotenoids and lipids. D1 provides most of the ligands for the Mn4-Ca-O5 cluster of the oxygen-evolving complex (OEC). There is also a Cl(-1) ion associated with D1 and D2, which is required for oxygen evolution. The PSII complex binds additional chlorophylls, carotenoids and specific lipids.</text>
</comment>
<comment type="subunit">
    <text evidence="1">PSII is composed of 1 copy each of membrane proteins PsbA, PsbB, PsbC, PsbD, PsbE, PsbF, PsbH, PsbI, PsbJ, PsbK, PsbL, PsbM, PsbT, PsbX, PsbY, PsbZ, Psb30/Ycf12, at least 3 peripheral proteins of the oxygen-evolving complex and a large number of cofactors. It forms dimeric complexes.</text>
</comment>
<comment type="subcellular location">
    <subcellularLocation>
        <location evidence="1">Plastid</location>
        <location evidence="1">Chloroplast thylakoid membrane</location>
        <topology evidence="1">Multi-pass membrane protein</topology>
    </subcellularLocation>
</comment>
<comment type="PTM">
    <text evidence="1">Tyr-161 forms a radical intermediate that is referred to as redox-active TyrZ, YZ or Y-Z.</text>
</comment>
<comment type="PTM">
    <text evidence="1">C-terminally processed by CTPA; processing is essential to allow assembly of the oxygen-evolving complex and thus photosynthetic growth.</text>
</comment>
<comment type="miscellaneous">
    <text evidence="1">2 of the reaction center chlorophylls (ChlD1 and ChlD2) are entirely coordinated by water.</text>
</comment>
<comment type="miscellaneous">
    <text evidence="1">Herbicides such as atrazine, BNT, diuron or ioxynil bind in the Q(B) binding site and block subsequent electron transfer.</text>
</comment>
<comment type="similarity">
    <text evidence="1">Belongs to the reaction center PufL/M/PsbA/D family.</text>
</comment>
<sequence>MTAILERRESESLWGRFCNWITSTENRLYIGWFGVLMIPTLLTATSVFIIAFIAAPPVDIDGIREPVSGSLLYGNNIISGAIIPTSAAIGLHFYPIWEAASVDEWLYNGGPYELIVLHFLLGVACYMGREWELSFRLGMRPWIAVAYSAPVAAATAVFLIYPIGQGSFSDGMPLGISGTFNFMIVFQAEHNILMHPFHMLGVAGVFGGSLFSAMHGSLVTSSLIRETTENESANEGYRFGQEEETYNIVAAHGYFGRLIFQYASFNNSRSLHFFLAAWPVVGIWFTALGISTMAFNLNGFNFNQSVVDSQGRVINTWADIINRANLGMEVMHERNAHNFPLDLAAVEVPSTNG</sequence>
<proteinExistence type="inferred from homology"/>
<protein>
    <recommendedName>
        <fullName evidence="1">Photosystem II protein D1</fullName>
        <shortName evidence="1">PSII D1 protein</shortName>
        <ecNumber evidence="1">1.10.3.9</ecNumber>
    </recommendedName>
    <alternativeName>
        <fullName evidence="1">Photosystem II Q(B) protein</fullName>
    </alternativeName>
</protein>
<feature type="initiator methionine" description="Removed" evidence="1">
    <location>
        <position position="1"/>
    </location>
</feature>
<feature type="chain" id="PRO_0000090466" description="Photosystem II protein D1" evidence="1">
    <location>
        <begin position="2"/>
        <end position="344"/>
    </location>
</feature>
<feature type="propeptide" id="PRO_0000316478" evidence="1">
    <location>
        <begin position="345"/>
        <end position="353"/>
    </location>
</feature>
<feature type="transmembrane region" description="Helical" evidence="1">
    <location>
        <begin position="29"/>
        <end position="46"/>
    </location>
</feature>
<feature type="transmembrane region" description="Helical" evidence="1">
    <location>
        <begin position="118"/>
        <end position="133"/>
    </location>
</feature>
<feature type="transmembrane region" description="Helical" evidence="1">
    <location>
        <begin position="142"/>
        <end position="156"/>
    </location>
</feature>
<feature type="transmembrane region" description="Helical" evidence="1">
    <location>
        <begin position="197"/>
        <end position="218"/>
    </location>
</feature>
<feature type="transmembrane region" description="Helical" evidence="1">
    <location>
        <begin position="274"/>
        <end position="288"/>
    </location>
</feature>
<feature type="binding site" description="axial binding residue" evidence="1">
    <location>
        <position position="118"/>
    </location>
    <ligand>
        <name>chlorophyll a</name>
        <dbReference type="ChEBI" id="CHEBI:58416"/>
        <label>ChlzD1</label>
    </ligand>
    <ligandPart>
        <name>Mg</name>
        <dbReference type="ChEBI" id="CHEBI:25107"/>
    </ligandPart>
</feature>
<feature type="binding site" evidence="1">
    <location>
        <position position="126"/>
    </location>
    <ligand>
        <name>pheophytin a</name>
        <dbReference type="ChEBI" id="CHEBI:136840"/>
        <label>D1</label>
    </ligand>
</feature>
<feature type="binding site" evidence="1">
    <location>
        <position position="170"/>
    </location>
    <ligand>
        <name>[CaMn4O5] cluster</name>
        <dbReference type="ChEBI" id="CHEBI:189552"/>
    </ligand>
</feature>
<feature type="binding site" evidence="1">
    <location>
        <position position="189"/>
    </location>
    <ligand>
        <name>[CaMn4O5] cluster</name>
        <dbReference type="ChEBI" id="CHEBI:189552"/>
    </ligand>
</feature>
<feature type="binding site" description="axial binding residue" evidence="1">
    <location>
        <position position="198"/>
    </location>
    <ligand>
        <name>chlorophyll a</name>
        <dbReference type="ChEBI" id="CHEBI:58416"/>
        <label>PD1</label>
    </ligand>
    <ligandPart>
        <name>Mg</name>
        <dbReference type="ChEBI" id="CHEBI:25107"/>
    </ligandPart>
</feature>
<feature type="binding site" evidence="1">
    <location>
        <position position="215"/>
    </location>
    <ligand>
        <name>a quinone</name>
        <dbReference type="ChEBI" id="CHEBI:132124"/>
        <label>B</label>
    </ligand>
</feature>
<feature type="binding site" evidence="1">
    <location>
        <position position="215"/>
    </location>
    <ligand>
        <name>Fe cation</name>
        <dbReference type="ChEBI" id="CHEBI:24875"/>
        <note>ligand shared with heterodimeric partner</note>
    </ligand>
</feature>
<feature type="binding site" evidence="1">
    <location>
        <begin position="264"/>
        <end position="265"/>
    </location>
    <ligand>
        <name>a quinone</name>
        <dbReference type="ChEBI" id="CHEBI:132124"/>
        <label>B</label>
    </ligand>
</feature>
<feature type="binding site" evidence="1">
    <location>
        <position position="272"/>
    </location>
    <ligand>
        <name>Fe cation</name>
        <dbReference type="ChEBI" id="CHEBI:24875"/>
        <note>ligand shared with heterodimeric partner</note>
    </ligand>
</feature>
<feature type="binding site" evidence="1">
    <location>
        <position position="332"/>
    </location>
    <ligand>
        <name>[CaMn4O5] cluster</name>
        <dbReference type="ChEBI" id="CHEBI:189552"/>
    </ligand>
</feature>
<feature type="binding site" evidence="1">
    <location>
        <position position="333"/>
    </location>
    <ligand>
        <name>[CaMn4O5] cluster</name>
        <dbReference type="ChEBI" id="CHEBI:189552"/>
    </ligand>
</feature>
<feature type="binding site" evidence="1">
    <location>
        <position position="342"/>
    </location>
    <ligand>
        <name>[CaMn4O5] cluster</name>
        <dbReference type="ChEBI" id="CHEBI:189552"/>
    </ligand>
</feature>
<feature type="binding site" evidence="1">
    <location>
        <position position="344"/>
    </location>
    <ligand>
        <name>[CaMn4O5] cluster</name>
        <dbReference type="ChEBI" id="CHEBI:189552"/>
    </ligand>
</feature>
<feature type="site" description="Tyrosine radical intermediate" evidence="1">
    <location>
        <position position="161"/>
    </location>
</feature>
<feature type="site" description="Stabilizes free radical intermediate" evidence="1">
    <location>
        <position position="190"/>
    </location>
</feature>
<feature type="site" description="Cleavage; by CTPA" evidence="1">
    <location>
        <begin position="344"/>
        <end position="345"/>
    </location>
</feature>
<feature type="modified residue" description="N-acetylthreonine" evidence="1">
    <location>
        <position position="2"/>
    </location>
</feature>
<feature type="modified residue" description="Phosphothreonine" evidence="1">
    <location>
        <position position="2"/>
    </location>
</feature>
<evidence type="ECO:0000255" key="1">
    <source>
        <dbReference type="HAMAP-Rule" id="MF_01379"/>
    </source>
</evidence>
<dbReference type="EC" id="1.10.3.9" evidence="1"/>
<dbReference type="EMBL" id="X78204">
    <property type="protein sequence ID" value="CAA55040.1"/>
    <property type="molecule type" value="Genomic_DNA"/>
</dbReference>
<dbReference type="PIR" id="S42492">
    <property type="entry name" value="S42492"/>
</dbReference>
<dbReference type="RefSeq" id="YP_009555878.1">
    <property type="nucleotide sequence ID" value="NC_040929.1"/>
</dbReference>
<dbReference type="SMR" id="P36491"/>
<dbReference type="GeneID" id="39110663"/>
<dbReference type="GO" id="GO:0009535">
    <property type="term" value="C:chloroplast thylakoid membrane"/>
    <property type="evidence" value="ECO:0007669"/>
    <property type="project" value="UniProtKB-SubCell"/>
</dbReference>
<dbReference type="GO" id="GO:0009523">
    <property type="term" value="C:photosystem II"/>
    <property type="evidence" value="ECO:0007669"/>
    <property type="project" value="UniProtKB-KW"/>
</dbReference>
<dbReference type="GO" id="GO:0016168">
    <property type="term" value="F:chlorophyll binding"/>
    <property type="evidence" value="ECO:0007669"/>
    <property type="project" value="UniProtKB-UniRule"/>
</dbReference>
<dbReference type="GO" id="GO:0045156">
    <property type="term" value="F:electron transporter, transferring electrons within the cyclic electron transport pathway of photosynthesis activity"/>
    <property type="evidence" value="ECO:0007669"/>
    <property type="project" value="InterPro"/>
</dbReference>
<dbReference type="GO" id="GO:0005506">
    <property type="term" value="F:iron ion binding"/>
    <property type="evidence" value="ECO:0007669"/>
    <property type="project" value="UniProtKB-UniRule"/>
</dbReference>
<dbReference type="GO" id="GO:0016682">
    <property type="term" value="F:oxidoreductase activity, acting on diphenols and related substances as donors, oxygen as acceptor"/>
    <property type="evidence" value="ECO:0007669"/>
    <property type="project" value="UniProtKB-UniRule"/>
</dbReference>
<dbReference type="GO" id="GO:0010242">
    <property type="term" value="F:oxygen evolving activity"/>
    <property type="evidence" value="ECO:0007669"/>
    <property type="project" value="UniProtKB-EC"/>
</dbReference>
<dbReference type="GO" id="GO:0009772">
    <property type="term" value="P:photosynthetic electron transport in photosystem II"/>
    <property type="evidence" value="ECO:0007669"/>
    <property type="project" value="InterPro"/>
</dbReference>
<dbReference type="GO" id="GO:0009635">
    <property type="term" value="P:response to herbicide"/>
    <property type="evidence" value="ECO:0007669"/>
    <property type="project" value="UniProtKB-KW"/>
</dbReference>
<dbReference type="CDD" id="cd09289">
    <property type="entry name" value="Photosystem-II_D1"/>
    <property type="match status" value="1"/>
</dbReference>
<dbReference type="FunFam" id="1.20.85.10:FF:000002">
    <property type="entry name" value="Photosystem II protein D1"/>
    <property type="match status" value="1"/>
</dbReference>
<dbReference type="Gene3D" id="1.20.85.10">
    <property type="entry name" value="Photosystem II protein D1-like"/>
    <property type="match status" value="1"/>
</dbReference>
<dbReference type="HAMAP" id="MF_01379">
    <property type="entry name" value="PSII_PsbA_D1"/>
    <property type="match status" value="1"/>
</dbReference>
<dbReference type="InterPro" id="IPR055266">
    <property type="entry name" value="D1/D2"/>
</dbReference>
<dbReference type="InterPro" id="IPR036854">
    <property type="entry name" value="Photo_II_D1/D2_sf"/>
</dbReference>
<dbReference type="InterPro" id="IPR000484">
    <property type="entry name" value="Photo_RC_L/M"/>
</dbReference>
<dbReference type="InterPro" id="IPR055265">
    <property type="entry name" value="Photo_RC_L/M_CS"/>
</dbReference>
<dbReference type="InterPro" id="IPR005867">
    <property type="entry name" value="PSII_D1"/>
</dbReference>
<dbReference type="NCBIfam" id="TIGR01151">
    <property type="entry name" value="psbA"/>
    <property type="match status" value="1"/>
</dbReference>
<dbReference type="PANTHER" id="PTHR33149:SF12">
    <property type="entry name" value="PHOTOSYSTEM II D2 PROTEIN"/>
    <property type="match status" value="1"/>
</dbReference>
<dbReference type="PANTHER" id="PTHR33149">
    <property type="entry name" value="PHOTOSYSTEM II PROTEIN D1"/>
    <property type="match status" value="1"/>
</dbReference>
<dbReference type="Pfam" id="PF00124">
    <property type="entry name" value="Photo_RC"/>
    <property type="match status" value="1"/>
</dbReference>
<dbReference type="PRINTS" id="PR00256">
    <property type="entry name" value="REACTNCENTRE"/>
</dbReference>
<dbReference type="SUPFAM" id="SSF81483">
    <property type="entry name" value="Bacterial photosystem II reaction centre, L and M subunits"/>
    <property type="match status" value="1"/>
</dbReference>
<dbReference type="PROSITE" id="PS00244">
    <property type="entry name" value="REACTION_CENTER"/>
    <property type="match status" value="1"/>
</dbReference>
<geneLocation type="chloroplast"/>
<accession>P36491</accession>
<gene>
    <name evidence="1" type="primary">psbA</name>
</gene>